<keyword id="KW-0687">Ribonucleoprotein</keyword>
<keyword id="KW-0689">Ribosomal protein</keyword>
<keyword id="KW-0694">RNA-binding</keyword>
<keyword id="KW-0699">rRNA-binding</keyword>
<keyword id="KW-0820">tRNA-binding</keyword>
<gene>
    <name evidence="1" type="primary">rplE</name>
    <name type="ordered locus">Tfu_2634</name>
</gene>
<feature type="chain" id="PRO_0000243080" description="Large ribosomal subunit protein uL5">
    <location>
        <begin position="1"/>
        <end position="191"/>
    </location>
</feature>
<organism>
    <name type="scientific">Thermobifida fusca (strain YX)</name>
    <dbReference type="NCBI Taxonomy" id="269800"/>
    <lineage>
        <taxon>Bacteria</taxon>
        <taxon>Bacillati</taxon>
        <taxon>Actinomycetota</taxon>
        <taxon>Actinomycetes</taxon>
        <taxon>Streptosporangiales</taxon>
        <taxon>Nocardiopsidaceae</taxon>
        <taxon>Thermobifida</taxon>
    </lineage>
</organism>
<dbReference type="EMBL" id="CP000088">
    <property type="protein sequence ID" value="AAZ56667.1"/>
    <property type="molecule type" value="Genomic_DNA"/>
</dbReference>
<dbReference type="RefSeq" id="WP_011293057.1">
    <property type="nucleotide sequence ID" value="NC_007333.1"/>
</dbReference>
<dbReference type="SMR" id="Q47LK5"/>
<dbReference type="STRING" id="269800.Tfu_2634"/>
<dbReference type="KEGG" id="tfu:Tfu_2634"/>
<dbReference type="eggNOG" id="COG0094">
    <property type="taxonomic scope" value="Bacteria"/>
</dbReference>
<dbReference type="HOGENOM" id="CLU_061015_2_1_11"/>
<dbReference type="OrthoDB" id="9806626at2"/>
<dbReference type="GO" id="GO:1990904">
    <property type="term" value="C:ribonucleoprotein complex"/>
    <property type="evidence" value="ECO:0007669"/>
    <property type="project" value="UniProtKB-KW"/>
</dbReference>
<dbReference type="GO" id="GO:0005840">
    <property type="term" value="C:ribosome"/>
    <property type="evidence" value="ECO:0007669"/>
    <property type="project" value="UniProtKB-KW"/>
</dbReference>
<dbReference type="GO" id="GO:0019843">
    <property type="term" value="F:rRNA binding"/>
    <property type="evidence" value="ECO:0007669"/>
    <property type="project" value="UniProtKB-UniRule"/>
</dbReference>
<dbReference type="GO" id="GO:0003735">
    <property type="term" value="F:structural constituent of ribosome"/>
    <property type="evidence" value="ECO:0007669"/>
    <property type="project" value="InterPro"/>
</dbReference>
<dbReference type="GO" id="GO:0000049">
    <property type="term" value="F:tRNA binding"/>
    <property type="evidence" value="ECO:0007669"/>
    <property type="project" value="UniProtKB-UniRule"/>
</dbReference>
<dbReference type="GO" id="GO:0006412">
    <property type="term" value="P:translation"/>
    <property type="evidence" value="ECO:0007669"/>
    <property type="project" value="UniProtKB-UniRule"/>
</dbReference>
<dbReference type="FunFam" id="3.30.1440.10:FF:000001">
    <property type="entry name" value="50S ribosomal protein L5"/>
    <property type="match status" value="1"/>
</dbReference>
<dbReference type="Gene3D" id="3.30.1440.10">
    <property type="match status" value="1"/>
</dbReference>
<dbReference type="HAMAP" id="MF_01333_B">
    <property type="entry name" value="Ribosomal_uL5_B"/>
    <property type="match status" value="1"/>
</dbReference>
<dbReference type="InterPro" id="IPR002132">
    <property type="entry name" value="Ribosomal_uL5"/>
</dbReference>
<dbReference type="InterPro" id="IPR020930">
    <property type="entry name" value="Ribosomal_uL5_bac-type"/>
</dbReference>
<dbReference type="InterPro" id="IPR031309">
    <property type="entry name" value="Ribosomal_uL5_C"/>
</dbReference>
<dbReference type="InterPro" id="IPR022803">
    <property type="entry name" value="Ribosomal_uL5_dom_sf"/>
</dbReference>
<dbReference type="InterPro" id="IPR031310">
    <property type="entry name" value="Ribosomal_uL5_N"/>
</dbReference>
<dbReference type="NCBIfam" id="NF000585">
    <property type="entry name" value="PRK00010.1"/>
    <property type="match status" value="1"/>
</dbReference>
<dbReference type="PANTHER" id="PTHR11994">
    <property type="entry name" value="60S RIBOSOMAL PROTEIN L11-RELATED"/>
    <property type="match status" value="1"/>
</dbReference>
<dbReference type="Pfam" id="PF00281">
    <property type="entry name" value="Ribosomal_L5"/>
    <property type="match status" value="1"/>
</dbReference>
<dbReference type="Pfam" id="PF00673">
    <property type="entry name" value="Ribosomal_L5_C"/>
    <property type="match status" value="1"/>
</dbReference>
<dbReference type="PIRSF" id="PIRSF002161">
    <property type="entry name" value="Ribosomal_L5"/>
    <property type="match status" value="1"/>
</dbReference>
<dbReference type="SUPFAM" id="SSF55282">
    <property type="entry name" value="RL5-like"/>
    <property type="match status" value="1"/>
</dbReference>
<proteinExistence type="inferred from homology"/>
<name>RL5_THEFY</name>
<reference key="1">
    <citation type="journal article" date="2007" name="J. Bacteriol.">
        <title>Genome sequence and analysis of the soil cellulolytic actinomycete Thermobifida fusca YX.</title>
        <authorList>
            <person name="Lykidis A."/>
            <person name="Mavromatis K."/>
            <person name="Ivanova N."/>
            <person name="Anderson I."/>
            <person name="Land M."/>
            <person name="DiBartolo G."/>
            <person name="Martinez M."/>
            <person name="Lapidus A."/>
            <person name="Lucas S."/>
            <person name="Copeland A."/>
            <person name="Richardson P."/>
            <person name="Wilson D.B."/>
            <person name="Kyrpides N."/>
        </authorList>
    </citation>
    <scope>NUCLEOTIDE SEQUENCE [LARGE SCALE GENOMIC DNA]</scope>
    <source>
        <strain>YX</strain>
    </source>
</reference>
<comment type="function">
    <text evidence="1">This is one of the proteins that bind and probably mediate the attachment of the 5S RNA into the large ribosomal subunit, where it forms part of the central protuberance. In the 70S ribosome it contacts protein S13 of the 30S subunit (bridge B1b), connecting the 2 subunits; this bridge is implicated in subunit movement. Contacts the P site tRNA; the 5S rRNA and some of its associated proteins might help stabilize positioning of ribosome-bound tRNAs.</text>
</comment>
<comment type="subunit">
    <text evidence="1">Part of the 50S ribosomal subunit; part of the 5S rRNA/L5/L18/L25 subcomplex. Contacts the 5S rRNA and the P site tRNA. Forms a bridge to the 30S subunit in the 70S ribosome.</text>
</comment>
<comment type="similarity">
    <text evidence="1">Belongs to the universal ribosomal protein uL5 family.</text>
</comment>
<protein>
    <recommendedName>
        <fullName evidence="1">Large ribosomal subunit protein uL5</fullName>
    </recommendedName>
    <alternativeName>
        <fullName evidence="2">50S ribosomal protein L5</fullName>
    </alternativeName>
</protein>
<accession>Q47LK5</accession>
<sequence length="191" mass="21460">MTVTNEIDAPPIPRLKQKYREEIIPALREEFGYTNIMQVPGLTKIVVNMGVGDAARDAKLIQGAIADLSAITGQKPKINRAKKSIAQFKLRQGQPIGASVTLRGDRMWEFLDRLLTLALPRIRDFRGLSAKQFDGNGNYTFGLTEQVMFHEIDPDKVDRQRGMDITIVTTAATDEEGRSLLRRLGFPFKED</sequence>
<evidence type="ECO:0000255" key="1">
    <source>
        <dbReference type="HAMAP-Rule" id="MF_01333"/>
    </source>
</evidence>
<evidence type="ECO:0000305" key="2"/>